<evidence type="ECO:0000255" key="1">
    <source>
        <dbReference type="HAMAP-Rule" id="MF_01367"/>
    </source>
</evidence>
<evidence type="ECO:0000305" key="2"/>
<dbReference type="EMBL" id="CP001185">
    <property type="protein sequence ID" value="ACJ75670.1"/>
    <property type="molecule type" value="Genomic_DNA"/>
</dbReference>
<dbReference type="RefSeq" id="WP_004101458.1">
    <property type="nucleotide sequence ID" value="NC_011653.1"/>
</dbReference>
<dbReference type="SMR" id="B7IHV6"/>
<dbReference type="STRING" id="484019.THA_1225"/>
<dbReference type="KEGG" id="taf:THA_1225"/>
<dbReference type="eggNOG" id="COG0093">
    <property type="taxonomic scope" value="Bacteria"/>
</dbReference>
<dbReference type="HOGENOM" id="CLU_095071_2_1_0"/>
<dbReference type="OrthoDB" id="9806379at2"/>
<dbReference type="Proteomes" id="UP000002453">
    <property type="component" value="Chromosome"/>
</dbReference>
<dbReference type="GO" id="GO:0022625">
    <property type="term" value="C:cytosolic large ribosomal subunit"/>
    <property type="evidence" value="ECO:0007669"/>
    <property type="project" value="TreeGrafter"/>
</dbReference>
<dbReference type="GO" id="GO:0070180">
    <property type="term" value="F:large ribosomal subunit rRNA binding"/>
    <property type="evidence" value="ECO:0007669"/>
    <property type="project" value="TreeGrafter"/>
</dbReference>
<dbReference type="GO" id="GO:0003735">
    <property type="term" value="F:structural constituent of ribosome"/>
    <property type="evidence" value="ECO:0007669"/>
    <property type="project" value="InterPro"/>
</dbReference>
<dbReference type="GO" id="GO:0006412">
    <property type="term" value="P:translation"/>
    <property type="evidence" value="ECO:0007669"/>
    <property type="project" value="UniProtKB-UniRule"/>
</dbReference>
<dbReference type="CDD" id="cd00337">
    <property type="entry name" value="Ribosomal_uL14"/>
    <property type="match status" value="1"/>
</dbReference>
<dbReference type="FunFam" id="2.40.150.20:FF:000001">
    <property type="entry name" value="50S ribosomal protein L14"/>
    <property type="match status" value="1"/>
</dbReference>
<dbReference type="Gene3D" id="2.40.150.20">
    <property type="entry name" value="Ribosomal protein L14"/>
    <property type="match status" value="1"/>
</dbReference>
<dbReference type="HAMAP" id="MF_01367">
    <property type="entry name" value="Ribosomal_uL14"/>
    <property type="match status" value="1"/>
</dbReference>
<dbReference type="InterPro" id="IPR000218">
    <property type="entry name" value="Ribosomal_uL14"/>
</dbReference>
<dbReference type="InterPro" id="IPR005745">
    <property type="entry name" value="Ribosomal_uL14_bac-type"/>
</dbReference>
<dbReference type="InterPro" id="IPR019972">
    <property type="entry name" value="Ribosomal_uL14_CS"/>
</dbReference>
<dbReference type="InterPro" id="IPR036853">
    <property type="entry name" value="Ribosomal_uL14_sf"/>
</dbReference>
<dbReference type="NCBIfam" id="TIGR01067">
    <property type="entry name" value="rplN_bact"/>
    <property type="match status" value="1"/>
</dbReference>
<dbReference type="PANTHER" id="PTHR11761">
    <property type="entry name" value="50S/60S RIBOSOMAL PROTEIN L14/L23"/>
    <property type="match status" value="1"/>
</dbReference>
<dbReference type="PANTHER" id="PTHR11761:SF3">
    <property type="entry name" value="LARGE RIBOSOMAL SUBUNIT PROTEIN UL14M"/>
    <property type="match status" value="1"/>
</dbReference>
<dbReference type="Pfam" id="PF00238">
    <property type="entry name" value="Ribosomal_L14"/>
    <property type="match status" value="1"/>
</dbReference>
<dbReference type="SMART" id="SM01374">
    <property type="entry name" value="Ribosomal_L14"/>
    <property type="match status" value="1"/>
</dbReference>
<dbReference type="SUPFAM" id="SSF50193">
    <property type="entry name" value="Ribosomal protein L14"/>
    <property type="match status" value="1"/>
</dbReference>
<dbReference type="PROSITE" id="PS00049">
    <property type="entry name" value="RIBOSOMAL_L14"/>
    <property type="match status" value="1"/>
</dbReference>
<comment type="function">
    <text evidence="1">Binds to 23S rRNA. Forms part of two intersubunit bridges in the 70S ribosome.</text>
</comment>
<comment type="subunit">
    <text evidence="1">Part of the 50S ribosomal subunit. Forms a cluster with proteins L3 and L19. In the 70S ribosome, L14 and L19 interact and together make contacts with the 16S rRNA in bridges B5 and B8.</text>
</comment>
<comment type="similarity">
    <text evidence="1">Belongs to the universal ribosomal protein uL14 family.</text>
</comment>
<feature type="chain" id="PRO_1000144341" description="Large ribosomal subunit protein uL14">
    <location>
        <begin position="1"/>
        <end position="122"/>
    </location>
</feature>
<gene>
    <name evidence="1" type="primary">rplN</name>
    <name type="ordered locus">THA_1225</name>
</gene>
<keyword id="KW-1185">Reference proteome</keyword>
<keyword id="KW-0687">Ribonucleoprotein</keyword>
<keyword id="KW-0689">Ribosomal protein</keyword>
<keyword id="KW-0694">RNA-binding</keyword>
<keyword id="KW-0699">rRNA-binding</keyword>
<name>RL14_THEAB</name>
<organism>
    <name type="scientific">Thermosipho africanus (strain TCF52B)</name>
    <dbReference type="NCBI Taxonomy" id="484019"/>
    <lineage>
        <taxon>Bacteria</taxon>
        <taxon>Thermotogati</taxon>
        <taxon>Thermotogota</taxon>
        <taxon>Thermotogae</taxon>
        <taxon>Thermotogales</taxon>
        <taxon>Fervidobacteriaceae</taxon>
        <taxon>Thermosipho</taxon>
    </lineage>
</organism>
<protein>
    <recommendedName>
        <fullName evidence="1">Large ribosomal subunit protein uL14</fullName>
    </recommendedName>
    <alternativeName>
        <fullName evidence="2">50S ribosomal protein L14</fullName>
    </alternativeName>
</protein>
<proteinExistence type="inferred from homology"/>
<reference key="1">
    <citation type="journal article" date="2009" name="J. Bacteriol.">
        <title>The genome of Thermosipho africanus TCF52B: lateral genetic connections to the Firmicutes and Archaea.</title>
        <authorList>
            <person name="Nesboe C.L."/>
            <person name="Bapteste E."/>
            <person name="Curtis B."/>
            <person name="Dahle H."/>
            <person name="Lopez P."/>
            <person name="Macleod D."/>
            <person name="Dlutek M."/>
            <person name="Bowman S."/>
            <person name="Zhaxybayeva O."/>
            <person name="Birkeland N.-K."/>
            <person name="Doolittle W.F."/>
        </authorList>
    </citation>
    <scope>NUCLEOTIDE SEQUENCE [LARGE SCALE GENOMIC DNA]</scope>
    <source>
        <strain>TCF52B</strain>
    </source>
</reference>
<sequence length="122" mass="13520">MIINESYLNVADNSGAKLLRVIRVMGGSRRKWGTVGDVVVCSVRDAVPNGDLKKGDVVKAVIVRTKKEIRRPDGTYIRFDDNAAVVLDKYNEPKGTRVFGPVAKELREKGFMKIVSLAPEVF</sequence>
<accession>B7IHV6</accession>